<gene>
    <name type="primary">RCBTB2</name>
    <name type="synonym">CHC1L</name>
    <name type="synonym">RLG</name>
</gene>
<sequence length="551" mass="60315">MEEELPLFSGDSGKPVQATLSSLKMLDVGKWPIFSLCSEEELQLIRQACVFGSAGNEVLYTTVNDEIFVLGTNCCGCLGLGDVQSTIEPRRLDSLNGKKIACLSYGSGPHIVLATTEGEVFTWGHNAYSQLGNGTTNHGLVPCHISTNLSNKQVIEVACGSYHSLVLTSDGEVFAWGYNNSGQVGSGSTVNQPIPRRVTGCLQNKVVVTIACGQMCCMAVVDTGEVYVWGYNGNGQLGLGNSGNQPTPCRVAALQGIRVQRVACGYAHTLVLTDEGQVYAWGANSYGQLGTGNKSNQSYPTPVTVEKDRIIEIAACHSTHTSAAKTQGGHVYMWGQCRGQSVILPHLTHFSCTDDVFACFATPAVTWRLLSVEPDDHLTVAESLKREFDNPDTADLKFLVDGKYIYAHKVLLKIRCEHFRSSLEDNEDDIVEMSEFSYPVYRAFLEYLYTDSISLSPEEAVGLLDLATFYRENRLKKLCQQTIKQGICEENAIALLSAAVKYDAQDLEEFCFRFCINHLTVVTQTSGFAEMDHDLLKNFISKASRVGAFKN</sequence>
<feature type="chain" id="PRO_0000206644" description="RCC1 and BTB domain-containing protein 2">
    <location>
        <begin position="1"/>
        <end position="551"/>
    </location>
</feature>
<feature type="repeat" description="RCC1 1" evidence="2">
    <location>
        <begin position="64"/>
        <end position="115"/>
    </location>
</feature>
<feature type="repeat" description="RCC1 2" evidence="2">
    <location>
        <begin position="117"/>
        <end position="169"/>
    </location>
</feature>
<feature type="repeat" description="RCC1 3" evidence="2">
    <location>
        <begin position="171"/>
        <end position="222"/>
    </location>
</feature>
<feature type="repeat" description="RCC1 4" evidence="2">
    <location>
        <begin position="223"/>
        <end position="274"/>
    </location>
</feature>
<feature type="repeat" description="RCC1 5" evidence="2">
    <location>
        <begin position="276"/>
        <end position="326"/>
    </location>
</feature>
<feature type="repeat" description="RCC1 6" evidence="2">
    <location>
        <begin position="328"/>
        <end position="382"/>
    </location>
</feature>
<feature type="domain" description="BTB" evidence="3">
    <location>
        <begin position="394"/>
        <end position="457"/>
    </location>
</feature>
<feature type="splice variant" id="VSP_016723" description="In isoform 2." evidence="5">
    <location>
        <begin position="1"/>
        <end position="24"/>
    </location>
</feature>
<feature type="sequence variant" id="VAR_024758" description="In dbSNP:rs9332000." evidence="4">
    <original>A</original>
    <variation>T</variation>
    <location>
        <position position="263"/>
    </location>
</feature>
<feature type="sequence variant" id="VAR_024759" description="In dbSNP:rs9332075." evidence="4">
    <original>C</original>
    <variation>S</variation>
    <location>
        <position position="515"/>
    </location>
</feature>
<organism>
    <name type="scientific">Homo sapiens</name>
    <name type="common">Human</name>
    <dbReference type="NCBI Taxonomy" id="9606"/>
    <lineage>
        <taxon>Eukaryota</taxon>
        <taxon>Metazoa</taxon>
        <taxon>Chordata</taxon>
        <taxon>Craniata</taxon>
        <taxon>Vertebrata</taxon>
        <taxon>Euteleostomi</taxon>
        <taxon>Mammalia</taxon>
        <taxon>Eutheria</taxon>
        <taxon>Euarchontoglires</taxon>
        <taxon>Primates</taxon>
        <taxon>Haplorrhini</taxon>
        <taxon>Catarrhini</taxon>
        <taxon>Hominidae</taxon>
        <taxon>Homo</taxon>
    </lineage>
</organism>
<evidence type="ECO:0000250" key="1">
    <source>
        <dbReference type="UniProtKB" id="Q99LJ7"/>
    </source>
</evidence>
<evidence type="ECO:0000255" key="2"/>
<evidence type="ECO:0000255" key="3">
    <source>
        <dbReference type="PROSITE-ProRule" id="PRU00037"/>
    </source>
</evidence>
<evidence type="ECO:0000269" key="4">
    <source ref="2"/>
</evidence>
<evidence type="ECO:0000303" key="5">
    <source>
    </source>
</evidence>
<protein>
    <recommendedName>
        <fullName>RCC1 and BTB domain-containing protein 2</fullName>
    </recommendedName>
    <alternativeName>
        <fullName>Chromosome condensation 1-like</fullName>
        <shortName>CHC1-L</shortName>
    </alternativeName>
    <alternativeName>
        <fullName>RCC1-like G exchanging factor</fullName>
    </alternativeName>
    <alternativeName>
        <fullName>Regulator of chromosome condensation and BTB domain-containing protein 2</fullName>
    </alternativeName>
</protein>
<keyword id="KW-0025">Alternative splicing</keyword>
<keyword id="KW-0968">Cytoplasmic vesicle</keyword>
<keyword id="KW-1267">Proteomics identification</keyword>
<keyword id="KW-1185">Reference proteome</keyword>
<keyword id="KW-0677">Repeat</keyword>
<accession>O95199</accession>
<accession>B2RDW8</accession>
<dbReference type="EMBL" id="AF060219">
    <property type="protein sequence ID" value="AAC79987.1"/>
    <property type="molecule type" value="mRNA"/>
</dbReference>
<dbReference type="EMBL" id="AY341245">
    <property type="protein sequence ID" value="AAP88928.1"/>
    <property type="molecule type" value="Genomic_DNA"/>
</dbReference>
<dbReference type="EMBL" id="AK315703">
    <property type="protein sequence ID" value="BAG38065.1"/>
    <property type="molecule type" value="mRNA"/>
</dbReference>
<dbReference type="EMBL" id="AL157813">
    <property type="status" value="NOT_ANNOTATED_CDS"/>
    <property type="molecule type" value="Genomic_DNA"/>
</dbReference>
<dbReference type="EMBL" id="CH471075">
    <property type="protein sequence ID" value="EAX08799.1"/>
    <property type="molecule type" value="Genomic_DNA"/>
</dbReference>
<dbReference type="EMBL" id="BC029052">
    <property type="protein sequence ID" value="AAH29052.1"/>
    <property type="molecule type" value="mRNA"/>
</dbReference>
<dbReference type="CCDS" id="CCDS73571.1">
    <molecule id="O95199-2"/>
</dbReference>
<dbReference type="CCDS" id="CCDS9411.1">
    <molecule id="O95199-1"/>
</dbReference>
<dbReference type="PIR" id="T50663">
    <property type="entry name" value="T50663"/>
</dbReference>
<dbReference type="RefSeq" id="NP_001259.1">
    <molecule id="O95199-1"/>
    <property type="nucleotide sequence ID" value="NM_001268.4"/>
</dbReference>
<dbReference type="RefSeq" id="NP_001273759.1">
    <property type="nucleotide sequence ID" value="NM_001286830.1"/>
</dbReference>
<dbReference type="RefSeq" id="NP_001273760.1">
    <molecule id="O95199-2"/>
    <property type="nucleotide sequence ID" value="NM_001286831.2"/>
</dbReference>
<dbReference type="RefSeq" id="NP_001273761.1">
    <property type="nucleotide sequence ID" value="NM_001286832.1"/>
</dbReference>
<dbReference type="RefSeq" id="NP_001339353.1">
    <molecule id="O95199-1"/>
    <property type="nucleotide sequence ID" value="NM_001352424.2"/>
</dbReference>
<dbReference type="RefSeq" id="NP_001339354.1">
    <molecule id="O95199-1"/>
    <property type="nucleotide sequence ID" value="NM_001352425.2"/>
</dbReference>
<dbReference type="RefSeq" id="NP_001339355.1">
    <molecule id="O95199-2"/>
    <property type="nucleotide sequence ID" value="NM_001352426.2"/>
</dbReference>
<dbReference type="RefSeq" id="XP_005266299.1">
    <property type="nucleotide sequence ID" value="XM_005266242.2"/>
</dbReference>
<dbReference type="RefSeq" id="XP_005266301.1">
    <property type="nucleotide sequence ID" value="XM_005266244.2"/>
</dbReference>
<dbReference type="RefSeq" id="XP_006719822.1">
    <property type="nucleotide sequence ID" value="XM_006719759.3"/>
</dbReference>
<dbReference type="SMR" id="O95199"/>
<dbReference type="BioGRID" id="107527">
    <property type="interactions" value="54"/>
</dbReference>
<dbReference type="FunCoup" id="O95199">
    <property type="interactions" value="1023"/>
</dbReference>
<dbReference type="IntAct" id="O95199">
    <property type="interactions" value="47"/>
</dbReference>
<dbReference type="STRING" id="9606.ENSP00000389910"/>
<dbReference type="GlyGen" id="O95199">
    <property type="glycosylation" value="1 site"/>
</dbReference>
<dbReference type="iPTMnet" id="O95199"/>
<dbReference type="PhosphoSitePlus" id="O95199"/>
<dbReference type="BioMuta" id="RCBTB2"/>
<dbReference type="MassIVE" id="O95199"/>
<dbReference type="PaxDb" id="9606-ENSP00000389910"/>
<dbReference type="PeptideAtlas" id="O95199"/>
<dbReference type="ProteomicsDB" id="50707">
    <molecule id="O95199-1"/>
</dbReference>
<dbReference type="ProteomicsDB" id="50708">
    <molecule id="O95199-2"/>
</dbReference>
<dbReference type="Antibodypedia" id="23851">
    <property type="antibodies" value="187 antibodies from 28 providers"/>
</dbReference>
<dbReference type="DNASU" id="1102"/>
<dbReference type="Ensembl" id="ENST00000344532.8">
    <molecule id="O95199-1"/>
    <property type="protein sequence ID" value="ENSP00000345144.3"/>
    <property type="gene ID" value="ENSG00000136161.13"/>
</dbReference>
<dbReference type="Ensembl" id="ENST00000544904.3">
    <molecule id="O95199-2"/>
    <property type="protein sequence ID" value="ENSP00000443904.2"/>
    <property type="gene ID" value="ENSG00000136161.13"/>
</dbReference>
<dbReference type="GeneID" id="1102"/>
<dbReference type="KEGG" id="hsa:1102"/>
<dbReference type="MANE-Select" id="ENST00000344532.8">
    <property type="protein sequence ID" value="ENSP00000345144.3"/>
    <property type="RefSeq nucleotide sequence ID" value="NM_001268.4"/>
    <property type="RefSeq protein sequence ID" value="NP_001259.1"/>
</dbReference>
<dbReference type="UCSC" id="uc001vch.5">
    <molecule id="O95199-1"/>
    <property type="organism name" value="human"/>
</dbReference>
<dbReference type="AGR" id="HGNC:1914"/>
<dbReference type="CTD" id="1102"/>
<dbReference type="DisGeNET" id="1102"/>
<dbReference type="GeneCards" id="RCBTB2"/>
<dbReference type="HGNC" id="HGNC:1914">
    <property type="gene designation" value="RCBTB2"/>
</dbReference>
<dbReference type="HPA" id="ENSG00000136161">
    <property type="expression patterns" value="Low tissue specificity"/>
</dbReference>
<dbReference type="MIM" id="603524">
    <property type="type" value="gene"/>
</dbReference>
<dbReference type="neXtProt" id="NX_O95199"/>
<dbReference type="OpenTargets" id="ENSG00000136161"/>
<dbReference type="PharmGKB" id="PA26450"/>
<dbReference type="VEuPathDB" id="HostDB:ENSG00000136161"/>
<dbReference type="eggNOG" id="KOG1426">
    <property type="taxonomic scope" value="Eukaryota"/>
</dbReference>
<dbReference type="GeneTree" id="ENSGT00940000158925"/>
<dbReference type="HOGENOM" id="CLU_029788_1_0_1"/>
<dbReference type="InParanoid" id="O95199"/>
<dbReference type="OMA" id="SYNEHTA"/>
<dbReference type="OrthoDB" id="16281at2759"/>
<dbReference type="PAN-GO" id="O95199">
    <property type="GO annotations" value="1 GO annotation based on evolutionary models"/>
</dbReference>
<dbReference type="PhylomeDB" id="O95199"/>
<dbReference type="TreeFam" id="TF329478"/>
<dbReference type="PathwayCommons" id="O95199"/>
<dbReference type="SignaLink" id="O95199"/>
<dbReference type="BioGRID-ORCS" id="1102">
    <property type="hits" value="15 hits in 1192 CRISPR screens"/>
</dbReference>
<dbReference type="ChiTaRS" id="RCBTB2">
    <property type="organism name" value="human"/>
</dbReference>
<dbReference type="GeneWiki" id="RCBTB2"/>
<dbReference type="GenomeRNAi" id="1102"/>
<dbReference type="Pharos" id="O95199">
    <property type="development level" value="Tbio"/>
</dbReference>
<dbReference type="PRO" id="PR:O95199"/>
<dbReference type="Proteomes" id="UP000005640">
    <property type="component" value="Chromosome 13"/>
</dbReference>
<dbReference type="RNAct" id="O95199">
    <property type="molecule type" value="protein"/>
</dbReference>
<dbReference type="Bgee" id="ENSG00000136161">
    <property type="expression patterns" value="Expressed in secondary oocyte and 196 other cell types or tissues"/>
</dbReference>
<dbReference type="ExpressionAtlas" id="O95199">
    <property type="expression patterns" value="baseline and differential"/>
</dbReference>
<dbReference type="GO" id="GO:0001669">
    <property type="term" value="C:acrosomal vesicle"/>
    <property type="evidence" value="ECO:0007669"/>
    <property type="project" value="UniProtKB-SubCell"/>
</dbReference>
<dbReference type="GO" id="GO:0005737">
    <property type="term" value="C:cytoplasm"/>
    <property type="evidence" value="ECO:0000318"/>
    <property type="project" value="GO_Central"/>
</dbReference>
<dbReference type="GO" id="GO:0005085">
    <property type="term" value="F:guanyl-nucleotide exchange factor activity"/>
    <property type="evidence" value="ECO:0000304"/>
    <property type="project" value="ProtInc"/>
</dbReference>
<dbReference type="GO" id="GO:0008283">
    <property type="term" value="P:cell population proliferation"/>
    <property type="evidence" value="ECO:0007669"/>
    <property type="project" value="Ensembl"/>
</dbReference>
<dbReference type="GO" id="GO:0048565">
    <property type="term" value="P:digestive tract development"/>
    <property type="evidence" value="ECO:0007669"/>
    <property type="project" value="Ensembl"/>
</dbReference>
<dbReference type="GO" id="GO:0001889">
    <property type="term" value="P:liver development"/>
    <property type="evidence" value="ECO:0007669"/>
    <property type="project" value="Ensembl"/>
</dbReference>
<dbReference type="GO" id="GO:0048535">
    <property type="term" value="P:lymph node development"/>
    <property type="evidence" value="ECO:0007669"/>
    <property type="project" value="Ensembl"/>
</dbReference>
<dbReference type="GO" id="GO:0048536">
    <property type="term" value="P:spleen development"/>
    <property type="evidence" value="ECO:0007669"/>
    <property type="project" value="Ensembl"/>
</dbReference>
<dbReference type="CDD" id="cd18529">
    <property type="entry name" value="BACK_RCBTB2"/>
    <property type="match status" value="1"/>
</dbReference>
<dbReference type="CDD" id="cd18354">
    <property type="entry name" value="BTB_POZ_RCBTB2_CHC1L"/>
    <property type="match status" value="1"/>
</dbReference>
<dbReference type="FunFam" id="2.130.10.30:FF:000033">
    <property type="entry name" value="RCC1 and BTB domain-containing protein 2"/>
    <property type="match status" value="1"/>
</dbReference>
<dbReference type="FunFam" id="2.130.10.30:FF:000038">
    <property type="entry name" value="RCC1 and BTB domain-containing protein 2"/>
    <property type="match status" value="1"/>
</dbReference>
<dbReference type="FunFam" id="1.25.40.420:FF:000006">
    <property type="entry name" value="RCC1 and BTB domain-containing protein 2 isoform X1"/>
    <property type="match status" value="1"/>
</dbReference>
<dbReference type="FunFam" id="3.30.710.10:FF:000040">
    <property type="entry name" value="RCC1 and BTB domain-containing protein 2 isoform X1"/>
    <property type="match status" value="1"/>
</dbReference>
<dbReference type="Gene3D" id="1.25.40.420">
    <property type="match status" value="1"/>
</dbReference>
<dbReference type="Gene3D" id="3.30.710.10">
    <property type="entry name" value="Potassium Channel Kv1.1, Chain A"/>
    <property type="match status" value="1"/>
</dbReference>
<dbReference type="Gene3D" id="2.130.10.30">
    <property type="entry name" value="Regulator of chromosome condensation 1/beta-lactamase-inhibitor protein II"/>
    <property type="match status" value="2"/>
</dbReference>
<dbReference type="InterPro" id="IPR000210">
    <property type="entry name" value="BTB/POZ_dom"/>
</dbReference>
<dbReference type="InterPro" id="IPR009091">
    <property type="entry name" value="RCC1/BLIP-II"/>
</dbReference>
<dbReference type="InterPro" id="IPR000408">
    <property type="entry name" value="Reg_chr_condens"/>
</dbReference>
<dbReference type="InterPro" id="IPR051625">
    <property type="entry name" value="Signaling_Regulatory_Domain"/>
</dbReference>
<dbReference type="InterPro" id="IPR011333">
    <property type="entry name" value="SKP1/BTB/POZ_sf"/>
</dbReference>
<dbReference type="PANTHER" id="PTHR22872">
    <property type="entry name" value="BTK-BINDING PROTEIN-RELATED"/>
    <property type="match status" value="1"/>
</dbReference>
<dbReference type="PANTHER" id="PTHR22872:SF3">
    <property type="entry name" value="RCC1 AND BTB DOMAIN CONTAINING PROTEIN 2"/>
    <property type="match status" value="1"/>
</dbReference>
<dbReference type="Pfam" id="PF00651">
    <property type="entry name" value="BTB"/>
    <property type="match status" value="1"/>
</dbReference>
<dbReference type="Pfam" id="PF25390">
    <property type="entry name" value="WD40_RLD"/>
    <property type="match status" value="1"/>
</dbReference>
<dbReference type="PRINTS" id="PR00633">
    <property type="entry name" value="RCCNDNSATION"/>
</dbReference>
<dbReference type="SMART" id="SM00225">
    <property type="entry name" value="BTB"/>
    <property type="match status" value="1"/>
</dbReference>
<dbReference type="SUPFAM" id="SSF54695">
    <property type="entry name" value="POZ domain"/>
    <property type="match status" value="1"/>
</dbReference>
<dbReference type="SUPFAM" id="SSF50985">
    <property type="entry name" value="RCC1/BLIP-II"/>
    <property type="match status" value="1"/>
</dbReference>
<dbReference type="PROSITE" id="PS50097">
    <property type="entry name" value="BTB"/>
    <property type="match status" value="1"/>
</dbReference>
<dbReference type="PROSITE" id="PS00626">
    <property type="entry name" value="RCC1_2"/>
    <property type="match status" value="1"/>
</dbReference>
<dbReference type="PROSITE" id="PS50012">
    <property type="entry name" value="RCC1_3"/>
    <property type="match status" value="4"/>
</dbReference>
<proteinExistence type="evidence at protein level"/>
<reference key="1">
    <citation type="journal article" date="1998" name="Genomics">
        <title>cDNA cloning, gene characterization and 13q14.3 chromosomal assignment of CHC1-L, a chromosome condensation regulator-like guanine nucleotide exchange factor.</title>
        <authorList>
            <person name="Devilder M.-C."/>
            <person name="Cadoret E."/>
            <person name="Cherel M."/>
            <person name="Moreau I."/>
            <person name="Rondeau G."/>
            <person name="Bezieau S."/>
            <person name="Moisan J.-P."/>
        </authorList>
    </citation>
    <scope>NUCLEOTIDE SEQUENCE [MRNA] (ISOFORMS 1 AND 2)</scope>
    <scope>TISSUE SPECIFICITY</scope>
</reference>
<reference key="2">
    <citation type="submission" date="2003-07" db="EMBL/GenBank/DDBJ databases">
        <authorList>
            <consortium name="NIEHS SNPs program"/>
        </authorList>
    </citation>
    <scope>NUCLEOTIDE SEQUENCE [GENOMIC DNA]</scope>
    <scope>VARIANTS THR-263 AND SER-515</scope>
</reference>
<reference key="3">
    <citation type="journal article" date="2004" name="Nat. Genet.">
        <title>Complete sequencing and characterization of 21,243 full-length human cDNAs.</title>
        <authorList>
            <person name="Ota T."/>
            <person name="Suzuki Y."/>
            <person name="Nishikawa T."/>
            <person name="Otsuki T."/>
            <person name="Sugiyama T."/>
            <person name="Irie R."/>
            <person name="Wakamatsu A."/>
            <person name="Hayashi K."/>
            <person name="Sato H."/>
            <person name="Nagai K."/>
            <person name="Kimura K."/>
            <person name="Makita H."/>
            <person name="Sekine M."/>
            <person name="Obayashi M."/>
            <person name="Nishi T."/>
            <person name="Shibahara T."/>
            <person name="Tanaka T."/>
            <person name="Ishii S."/>
            <person name="Yamamoto J."/>
            <person name="Saito K."/>
            <person name="Kawai Y."/>
            <person name="Isono Y."/>
            <person name="Nakamura Y."/>
            <person name="Nagahari K."/>
            <person name="Murakami K."/>
            <person name="Yasuda T."/>
            <person name="Iwayanagi T."/>
            <person name="Wagatsuma M."/>
            <person name="Shiratori A."/>
            <person name="Sudo H."/>
            <person name="Hosoiri T."/>
            <person name="Kaku Y."/>
            <person name="Kodaira H."/>
            <person name="Kondo H."/>
            <person name="Sugawara M."/>
            <person name="Takahashi M."/>
            <person name="Kanda K."/>
            <person name="Yokoi T."/>
            <person name="Furuya T."/>
            <person name="Kikkawa E."/>
            <person name="Omura Y."/>
            <person name="Abe K."/>
            <person name="Kamihara K."/>
            <person name="Katsuta N."/>
            <person name="Sato K."/>
            <person name="Tanikawa M."/>
            <person name="Yamazaki M."/>
            <person name="Ninomiya K."/>
            <person name="Ishibashi T."/>
            <person name="Yamashita H."/>
            <person name="Murakawa K."/>
            <person name="Fujimori K."/>
            <person name="Tanai H."/>
            <person name="Kimata M."/>
            <person name="Watanabe M."/>
            <person name="Hiraoka S."/>
            <person name="Chiba Y."/>
            <person name="Ishida S."/>
            <person name="Ono Y."/>
            <person name="Takiguchi S."/>
            <person name="Watanabe S."/>
            <person name="Yosida M."/>
            <person name="Hotuta T."/>
            <person name="Kusano J."/>
            <person name="Kanehori K."/>
            <person name="Takahashi-Fujii A."/>
            <person name="Hara H."/>
            <person name="Tanase T.-O."/>
            <person name="Nomura Y."/>
            <person name="Togiya S."/>
            <person name="Komai F."/>
            <person name="Hara R."/>
            <person name="Takeuchi K."/>
            <person name="Arita M."/>
            <person name="Imose N."/>
            <person name="Musashino K."/>
            <person name="Yuuki H."/>
            <person name="Oshima A."/>
            <person name="Sasaki N."/>
            <person name="Aotsuka S."/>
            <person name="Yoshikawa Y."/>
            <person name="Matsunawa H."/>
            <person name="Ichihara T."/>
            <person name="Shiohata N."/>
            <person name="Sano S."/>
            <person name="Moriya S."/>
            <person name="Momiyama H."/>
            <person name="Satoh N."/>
            <person name="Takami S."/>
            <person name="Terashima Y."/>
            <person name="Suzuki O."/>
            <person name="Nakagawa S."/>
            <person name="Senoh A."/>
            <person name="Mizoguchi H."/>
            <person name="Goto Y."/>
            <person name="Shimizu F."/>
            <person name="Wakebe H."/>
            <person name="Hishigaki H."/>
            <person name="Watanabe T."/>
            <person name="Sugiyama A."/>
            <person name="Takemoto M."/>
            <person name="Kawakami B."/>
            <person name="Yamazaki M."/>
            <person name="Watanabe K."/>
            <person name="Kumagai A."/>
            <person name="Itakura S."/>
            <person name="Fukuzumi Y."/>
            <person name="Fujimori Y."/>
            <person name="Komiyama M."/>
            <person name="Tashiro H."/>
            <person name="Tanigami A."/>
            <person name="Fujiwara T."/>
            <person name="Ono T."/>
            <person name="Yamada K."/>
            <person name="Fujii Y."/>
            <person name="Ozaki K."/>
            <person name="Hirao M."/>
            <person name="Ohmori Y."/>
            <person name="Kawabata A."/>
            <person name="Hikiji T."/>
            <person name="Kobatake N."/>
            <person name="Inagaki H."/>
            <person name="Ikema Y."/>
            <person name="Okamoto S."/>
            <person name="Okitani R."/>
            <person name="Kawakami T."/>
            <person name="Noguchi S."/>
            <person name="Itoh T."/>
            <person name="Shigeta K."/>
            <person name="Senba T."/>
            <person name="Matsumura K."/>
            <person name="Nakajima Y."/>
            <person name="Mizuno T."/>
            <person name="Morinaga M."/>
            <person name="Sasaki M."/>
            <person name="Togashi T."/>
            <person name="Oyama M."/>
            <person name="Hata H."/>
            <person name="Watanabe M."/>
            <person name="Komatsu T."/>
            <person name="Mizushima-Sugano J."/>
            <person name="Satoh T."/>
            <person name="Shirai Y."/>
            <person name="Takahashi Y."/>
            <person name="Nakagawa K."/>
            <person name="Okumura K."/>
            <person name="Nagase T."/>
            <person name="Nomura N."/>
            <person name="Kikuchi H."/>
            <person name="Masuho Y."/>
            <person name="Yamashita R."/>
            <person name="Nakai K."/>
            <person name="Yada T."/>
            <person name="Nakamura Y."/>
            <person name="Ohara O."/>
            <person name="Isogai T."/>
            <person name="Sugano S."/>
        </authorList>
    </citation>
    <scope>NUCLEOTIDE SEQUENCE [LARGE SCALE MRNA] (ISOFORM 1)</scope>
    <source>
        <tissue>Testis</tissue>
    </source>
</reference>
<reference key="4">
    <citation type="journal article" date="2004" name="Nature">
        <title>The DNA sequence and analysis of human chromosome 13.</title>
        <authorList>
            <person name="Dunham A."/>
            <person name="Matthews L.H."/>
            <person name="Burton J."/>
            <person name="Ashurst J.L."/>
            <person name="Howe K.L."/>
            <person name="Ashcroft K.J."/>
            <person name="Beare D.M."/>
            <person name="Burford D.C."/>
            <person name="Hunt S.E."/>
            <person name="Griffiths-Jones S."/>
            <person name="Jones M.C."/>
            <person name="Keenan S.J."/>
            <person name="Oliver K."/>
            <person name="Scott C.E."/>
            <person name="Ainscough R."/>
            <person name="Almeida J.P."/>
            <person name="Ambrose K.D."/>
            <person name="Andrews D.T."/>
            <person name="Ashwell R.I.S."/>
            <person name="Babbage A.K."/>
            <person name="Bagguley C.L."/>
            <person name="Bailey J."/>
            <person name="Bannerjee R."/>
            <person name="Barlow K.F."/>
            <person name="Bates K."/>
            <person name="Beasley H."/>
            <person name="Bird C.P."/>
            <person name="Bray-Allen S."/>
            <person name="Brown A.J."/>
            <person name="Brown J.Y."/>
            <person name="Burrill W."/>
            <person name="Carder C."/>
            <person name="Carter N.P."/>
            <person name="Chapman J.C."/>
            <person name="Clamp M.E."/>
            <person name="Clark S.Y."/>
            <person name="Clarke G."/>
            <person name="Clee C.M."/>
            <person name="Clegg S.C."/>
            <person name="Cobley V."/>
            <person name="Collins J.E."/>
            <person name="Corby N."/>
            <person name="Coville G.J."/>
            <person name="Deloukas P."/>
            <person name="Dhami P."/>
            <person name="Dunham I."/>
            <person name="Dunn M."/>
            <person name="Earthrowl M.E."/>
            <person name="Ellington A.G."/>
            <person name="Faulkner L."/>
            <person name="Frankish A.G."/>
            <person name="Frankland J."/>
            <person name="French L."/>
            <person name="Garner P."/>
            <person name="Garnett J."/>
            <person name="Gilbert J.G.R."/>
            <person name="Gilson C.J."/>
            <person name="Ghori J."/>
            <person name="Grafham D.V."/>
            <person name="Gribble S.M."/>
            <person name="Griffiths C."/>
            <person name="Hall R.E."/>
            <person name="Hammond S."/>
            <person name="Harley J.L."/>
            <person name="Hart E.A."/>
            <person name="Heath P.D."/>
            <person name="Howden P.J."/>
            <person name="Huckle E.J."/>
            <person name="Hunt P.J."/>
            <person name="Hunt A.R."/>
            <person name="Johnson C."/>
            <person name="Johnson D."/>
            <person name="Kay M."/>
            <person name="Kimberley A.M."/>
            <person name="King A."/>
            <person name="Laird G.K."/>
            <person name="Langford C.J."/>
            <person name="Lawlor S."/>
            <person name="Leongamornlert D.A."/>
            <person name="Lloyd D.M."/>
            <person name="Lloyd C."/>
            <person name="Loveland J.E."/>
            <person name="Lovell J."/>
            <person name="Martin S."/>
            <person name="Mashreghi-Mohammadi M."/>
            <person name="McLaren S.J."/>
            <person name="McMurray A."/>
            <person name="Milne S."/>
            <person name="Moore M.J.F."/>
            <person name="Nickerson T."/>
            <person name="Palmer S.A."/>
            <person name="Pearce A.V."/>
            <person name="Peck A.I."/>
            <person name="Pelan S."/>
            <person name="Phillimore B."/>
            <person name="Porter K.M."/>
            <person name="Rice C.M."/>
            <person name="Searle S."/>
            <person name="Sehra H.K."/>
            <person name="Shownkeen R."/>
            <person name="Skuce C.D."/>
            <person name="Smith M."/>
            <person name="Steward C.A."/>
            <person name="Sycamore N."/>
            <person name="Tester J."/>
            <person name="Thomas D.W."/>
            <person name="Tracey A."/>
            <person name="Tromans A."/>
            <person name="Tubby B."/>
            <person name="Wall M."/>
            <person name="Wallis J.M."/>
            <person name="West A.P."/>
            <person name="Whitehead S.L."/>
            <person name="Willey D.L."/>
            <person name="Wilming L."/>
            <person name="Wray P.W."/>
            <person name="Wright M.W."/>
            <person name="Young L."/>
            <person name="Coulson A."/>
            <person name="Durbin R.M."/>
            <person name="Hubbard T."/>
            <person name="Sulston J.E."/>
            <person name="Beck S."/>
            <person name="Bentley D.R."/>
            <person name="Rogers J."/>
            <person name="Ross M.T."/>
        </authorList>
    </citation>
    <scope>NUCLEOTIDE SEQUENCE [LARGE SCALE GENOMIC DNA]</scope>
</reference>
<reference key="5">
    <citation type="submission" date="2005-07" db="EMBL/GenBank/DDBJ databases">
        <authorList>
            <person name="Mural R.J."/>
            <person name="Istrail S."/>
            <person name="Sutton G.G."/>
            <person name="Florea L."/>
            <person name="Halpern A.L."/>
            <person name="Mobarry C.M."/>
            <person name="Lippert R."/>
            <person name="Walenz B."/>
            <person name="Shatkay H."/>
            <person name="Dew I."/>
            <person name="Miller J.R."/>
            <person name="Flanigan M.J."/>
            <person name="Edwards N.J."/>
            <person name="Bolanos R."/>
            <person name="Fasulo D."/>
            <person name="Halldorsson B.V."/>
            <person name="Hannenhalli S."/>
            <person name="Turner R."/>
            <person name="Yooseph S."/>
            <person name="Lu F."/>
            <person name="Nusskern D.R."/>
            <person name="Shue B.C."/>
            <person name="Zheng X.H."/>
            <person name="Zhong F."/>
            <person name="Delcher A.L."/>
            <person name="Huson D.H."/>
            <person name="Kravitz S.A."/>
            <person name="Mouchard L."/>
            <person name="Reinert K."/>
            <person name="Remington K.A."/>
            <person name="Clark A.G."/>
            <person name="Waterman M.S."/>
            <person name="Eichler E.E."/>
            <person name="Adams M.D."/>
            <person name="Hunkapiller M.W."/>
            <person name="Myers E.W."/>
            <person name="Venter J.C."/>
        </authorList>
    </citation>
    <scope>NUCLEOTIDE SEQUENCE [LARGE SCALE GENOMIC DNA]</scope>
</reference>
<reference key="6">
    <citation type="journal article" date="2004" name="Genome Res.">
        <title>The status, quality, and expansion of the NIH full-length cDNA project: the Mammalian Gene Collection (MGC).</title>
        <authorList>
            <consortium name="The MGC Project Team"/>
        </authorList>
    </citation>
    <scope>NUCLEOTIDE SEQUENCE [LARGE SCALE MRNA] (ISOFORM 1)</scope>
    <source>
        <tissue>Brain</tissue>
    </source>
</reference>
<comment type="interaction">
    <interactant intactId="EBI-742404">
        <id>O95199</id>
    </interactant>
    <interactant intactId="EBI-2513774">
        <id>O95363</id>
        <label>FARS2</label>
    </interactant>
    <organismsDiffer>false</organismsDiffer>
    <experiments>6</experiments>
</comment>
<comment type="interaction">
    <interactant intactId="EBI-742404">
        <id>O95199</id>
    </interactant>
    <interactant intactId="EBI-10288852">
        <id>Q9UBU8-2</id>
        <label>MORF4L1</label>
    </interactant>
    <organismsDiffer>false</organismsDiffer>
    <experiments>3</experiments>
</comment>
<comment type="interaction">
    <interactant intactId="EBI-742404">
        <id>O95199</id>
    </interactant>
    <interactant intactId="EBI-1052153">
        <id>Q8WVJ2</id>
        <label>NUDCD2</label>
    </interactant>
    <organismsDiffer>false</organismsDiffer>
    <experiments>2</experiments>
</comment>
<comment type="interaction">
    <interactant intactId="EBI-742404">
        <id>O95199</id>
    </interactant>
    <interactant intactId="EBI-12089905">
        <id>O60733</id>
        <label>PLA2G6</label>
    </interactant>
    <organismsDiffer>false</organismsDiffer>
    <experiments>3</experiments>
</comment>
<comment type="interaction">
    <interactant intactId="EBI-742404">
        <id>O95199</id>
    </interactant>
    <interactant intactId="EBI-11310604">
        <id>O75884</id>
        <label>RBBP9</label>
    </interactant>
    <organismsDiffer>false</organismsDiffer>
    <experiments>3</experiments>
</comment>
<comment type="interaction">
    <interactant intactId="EBI-742404">
        <id>O95199</id>
    </interactant>
    <interactant intactId="EBI-10180829">
        <id>Q7KZS0</id>
        <label>UBE2I</label>
    </interactant>
    <organismsDiffer>false</organismsDiffer>
    <experiments>3</experiments>
</comment>
<comment type="subcellular location">
    <subcellularLocation>
        <location evidence="1">Cytoplasmic vesicle</location>
        <location evidence="1">Secretory vesicle</location>
        <location evidence="1">Acrosome</location>
    </subcellularLocation>
    <text evidence="1">Mainly found in the acrosomal cap region.</text>
</comment>
<comment type="alternative products">
    <event type="alternative splicing"/>
    <isoform>
        <id>O95199-1</id>
        <name>1</name>
        <sequence type="displayed"/>
    </isoform>
    <isoform>
        <id>O95199-2</id>
        <name>2</name>
        <sequence type="described" ref="VSP_016723"/>
    </isoform>
</comment>
<comment type="domain">
    <text evidence="1">The BTB domain might play a role in targeting to acrosomal vesicles.</text>
</comment>
<name>RCBT2_HUMAN</name>